<gene>
    <name type="primary">rpl27</name>
</gene>
<geneLocation type="chloroplast"/>
<proteinExistence type="inferred from homology"/>
<keyword id="KW-0150">Chloroplast</keyword>
<keyword id="KW-0934">Plastid</keyword>
<keyword id="KW-0687">Ribonucleoprotein</keyword>
<keyword id="KW-0689">Ribosomal protein</keyword>
<name>RK27_GUITH</name>
<comment type="subcellular location">
    <subcellularLocation>
        <location>Plastid</location>
        <location>Chloroplast</location>
    </subcellularLocation>
</comment>
<comment type="similarity">
    <text evidence="2">Belongs to the bacterial ribosomal protein bL27 family.</text>
</comment>
<accession>O78430</accession>
<reference key="1">
    <citation type="journal article" date="1999" name="J. Mol. Evol.">
        <title>The plastid genome of the cryptophyte alga, Guillardia theta: complete sequence and conserved synteny groups confirm its common ancestry with red algae.</title>
        <authorList>
            <person name="Douglas S.E."/>
            <person name="Penny S.L."/>
        </authorList>
    </citation>
    <scope>NUCLEOTIDE SEQUENCE [LARGE SCALE GENOMIC DNA]</scope>
</reference>
<dbReference type="EMBL" id="AF041468">
    <property type="protein sequence ID" value="AAC35615.1"/>
    <property type="molecule type" value="Genomic_DNA"/>
</dbReference>
<dbReference type="RefSeq" id="NP_050681.1">
    <property type="nucleotide sequence ID" value="NC_000926.1"/>
</dbReference>
<dbReference type="SMR" id="O78430"/>
<dbReference type="GeneID" id="856972"/>
<dbReference type="HOGENOM" id="CLU_095424_4_0_1"/>
<dbReference type="OMA" id="GKDHTLH"/>
<dbReference type="GO" id="GO:0009507">
    <property type="term" value="C:chloroplast"/>
    <property type="evidence" value="ECO:0007669"/>
    <property type="project" value="UniProtKB-SubCell"/>
</dbReference>
<dbReference type="GO" id="GO:0022625">
    <property type="term" value="C:cytosolic large ribosomal subunit"/>
    <property type="evidence" value="ECO:0007669"/>
    <property type="project" value="TreeGrafter"/>
</dbReference>
<dbReference type="GO" id="GO:0003735">
    <property type="term" value="F:structural constituent of ribosome"/>
    <property type="evidence" value="ECO:0007669"/>
    <property type="project" value="InterPro"/>
</dbReference>
<dbReference type="GO" id="GO:0006412">
    <property type="term" value="P:translation"/>
    <property type="evidence" value="ECO:0007669"/>
    <property type="project" value="UniProtKB-UniRule"/>
</dbReference>
<dbReference type="FunFam" id="2.40.50.100:FF:000004">
    <property type="entry name" value="50S ribosomal protein L27"/>
    <property type="match status" value="1"/>
</dbReference>
<dbReference type="Gene3D" id="2.40.50.100">
    <property type="match status" value="1"/>
</dbReference>
<dbReference type="HAMAP" id="MF_00539">
    <property type="entry name" value="Ribosomal_bL27"/>
    <property type="match status" value="1"/>
</dbReference>
<dbReference type="InterPro" id="IPR001684">
    <property type="entry name" value="Ribosomal_bL27"/>
</dbReference>
<dbReference type="InterPro" id="IPR018261">
    <property type="entry name" value="Ribosomal_bL27_CS"/>
</dbReference>
<dbReference type="NCBIfam" id="TIGR00062">
    <property type="entry name" value="L27"/>
    <property type="match status" value="1"/>
</dbReference>
<dbReference type="PANTHER" id="PTHR15893:SF0">
    <property type="entry name" value="LARGE RIBOSOMAL SUBUNIT PROTEIN BL27M"/>
    <property type="match status" value="1"/>
</dbReference>
<dbReference type="PANTHER" id="PTHR15893">
    <property type="entry name" value="RIBOSOMAL PROTEIN L27"/>
    <property type="match status" value="1"/>
</dbReference>
<dbReference type="Pfam" id="PF01016">
    <property type="entry name" value="Ribosomal_L27"/>
    <property type="match status" value="1"/>
</dbReference>
<dbReference type="PRINTS" id="PR00063">
    <property type="entry name" value="RIBOSOMALL27"/>
</dbReference>
<dbReference type="SUPFAM" id="SSF110324">
    <property type="entry name" value="Ribosomal L27 protein-like"/>
    <property type="match status" value="1"/>
</dbReference>
<dbReference type="PROSITE" id="PS00831">
    <property type="entry name" value="RIBOSOMAL_L27"/>
    <property type="match status" value="1"/>
</dbReference>
<feature type="chain" id="PRO_0000181222" description="Large ribosomal subunit protein bL27c">
    <location>
        <begin position="1"/>
        <end position="86"/>
    </location>
</feature>
<feature type="region of interest" description="Disordered" evidence="1">
    <location>
        <begin position="1"/>
        <end position="20"/>
    </location>
</feature>
<feature type="compositionally biased region" description="Polar residues" evidence="1">
    <location>
        <begin position="7"/>
        <end position="19"/>
    </location>
</feature>
<organism>
    <name type="scientific">Guillardia theta</name>
    <name type="common">Cryptophyte</name>
    <name type="synonym">Cryptomonas phi</name>
    <dbReference type="NCBI Taxonomy" id="55529"/>
    <lineage>
        <taxon>Eukaryota</taxon>
        <taxon>Cryptophyceae</taxon>
        <taxon>Pyrenomonadales</taxon>
        <taxon>Geminigeraceae</taxon>
        <taxon>Guillardia</taxon>
    </lineage>
</organism>
<sequence length="86" mass="9534">MAHKKGSGSTRNGRDSNAQRLGVKKYGGEYVIAGNILIRQRGTNVKAGFNVGIGKDNTLYSLINGEVKFERFDKKRKKISVYPCLD</sequence>
<protein>
    <recommendedName>
        <fullName evidence="2">Large ribosomal subunit protein bL27c</fullName>
    </recommendedName>
    <alternativeName>
        <fullName>50S ribosomal protein L27, chloroplastic</fullName>
    </alternativeName>
</protein>
<evidence type="ECO:0000256" key="1">
    <source>
        <dbReference type="SAM" id="MobiDB-lite"/>
    </source>
</evidence>
<evidence type="ECO:0000305" key="2"/>